<keyword id="KW-0106">Calcium</keyword>
<keyword id="KW-0963">Cytoplasm</keyword>
<keyword id="KW-0378">Hydrolase</keyword>
<keyword id="KW-0479">Metal-binding</keyword>
<accession>Q8CQ97</accession>
<organism>
    <name type="scientific">Staphylococcus epidermidis (strain ATCC 12228 / FDA PCI 1200)</name>
    <dbReference type="NCBI Taxonomy" id="176280"/>
    <lineage>
        <taxon>Bacteria</taxon>
        <taxon>Bacillati</taxon>
        <taxon>Bacillota</taxon>
        <taxon>Bacilli</taxon>
        <taxon>Bacillales</taxon>
        <taxon>Staphylococcaceae</taxon>
        <taxon>Staphylococcus</taxon>
    </lineage>
</organism>
<feature type="chain" id="PRO_0000259754" description="Lactonase drp35">
    <location>
        <begin position="1"/>
        <end position="325"/>
    </location>
</feature>
<feature type="active site" description="Proton donor" evidence="2">
    <location>
        <position position="234"/>
    </location>
</feature>
<feature type="binding site" evidence="1">
    <location>
        <position position="46"/>
    </location>
    <ligand>
        <name>Ca(2+)</name>
        <dbReference type="ChEBI" id="CHEBI:29108"/>
        <label>1</label>
        <note>catalytic</note>
    </ligand>
</feature>
<feature type="binding site" evidence="1">
    <location>
        <position position="108"/>
    </location>
    <ligand>
        <name>Ca(2+)</name>
        <dbReference type="ChEBI" id="CHEBI:29108"/>
        <label>2</label>
    </ligand>
</feature>
<feature type="binding site" evidence="1">
    <location>
        <position position="110"/>
    </location>
    <ligand>
        <name>Ca(2+)</name>
        <dbReference type="ChEBI" id="CHEBI:29108"/>
        <label>2</label>
    </ligand>
</feature>
<feature type="binding site" evidence="1">
    <location>
        <position position="128"/>
    </location>
    <ligand>
        <name>Ca(2+)</name>
        <dbReference type="ChEBI" id="CHEBI:29108"/>
        <label>2</label>
    </ligand>
</feature>
<feature type="binding site" evidence="1">
    <location>
        <position position="131"/>
    </location>
    <ligand>
        <name>Ca(2+)</name>
        <dbReference type="ChEBI" id="CHEBI:29108"/>
        <label>2</label>
    </ligand>
</feature>
<feature type="binding site" evidence="1">
    <location>
        <position position="133"/>
    </location>
    <ligand>
        <name>Ca(2+)</name>
        <dbReference type="ChEBI" id="CHEBI:29108"/>
        <label>2</label>
    </ligand>
</feature>
<feature type="binding site" evidence="1">
    <location>
        <position position="136"/>
    </location>
    <ligand>
        <name>Ca(2+)</name>
        <dbReference type="ChEBI" id="CHEBI:29108"/>
        <label>1</label>
        <note>catalytic</note>
    </ligand>
</feature>
<feature type="binding site" evidence="1">
    <location>
        <position position="183"/>
    </location>
    <ligand>
        <name>Ca(2+)</name>
        <dbReference type="ChEBI" id="CHEBI:29108"/>
        <label>1</label>
        <note>catalytic</note>
    </ligand>
</feature>
<feature type="binding site" evidence="1">
    <location>
        <position position="234"/>
    </location>
    <ligand>
        <name>Ca(2+)</name>
        <dbReference type="ChEBI" id="CHEBI:29108"/>
        <label>1</label>
        <note>catalytic</note>
    </ligand>
</feature>
<feature type="binding site" evidence="1">
    <location>
        <position position="235"/>
    </location>
    <ligand>
        <name>Ca(2+)</name>
        <dbReference type="ChEBI" id="CHEBI:29108"/>
        <label>1</label>
        <note>catalytic</note>
    </ligand>
</feature>
<comment type="function">
    <text evidence="1">Exhibits lactonase activity. Acts in cells with perturbed membrane integrity and is possibly related to the membrane homeostasis (By similarity).</text>
</comment>
<comment type="cofactor">
    <cofactor evidence="1">
        <name>Ca(2+)</name>
        <dbReference type="ChEBI" id="CHEBI:29108"/>
    </cofactor>
    <text evidence="1">Binds 2 Ca(2+) ions per subunit.</text>
</comment>
<comment type="subcellular location">
    <subcellularLocation>
        <location evidence="1">Cytoplasm</location>
    </subcellularLocation>
</comment>
<comment type="similarity">
    <text evidence="3">Belongs to the SMP-30/CGR1 family.</text>
</comment>
<proteinExistence type="inferred from homology"/>
<sequence>MANQKLPTLKYTGKSESAVPIVSESELQTVTAEPWVKISDKGLQLEGLNFNREGQLFLLDVFEGNIFKVNPATKEVTTKFQSVKDNPAAIKVHKDGRLFICYLGDFKTTGGIFATTEKGEQIEEIISDLNTEYCIDDMVFDSKGGFYFTDFRGYSTQPLGGVYYVDPDFKTVTPIIQNISVANGIALSTDEKVLWVTETTTNRLHRIALENDGVTIAPFGATIPYYFTGHEGPDSCCIDSDDNLYVAMYGQGRVLVFNKRGYPIGQILMPGRDDGKMLRTTHPQFIPGTNQLIICTNDIENHSEGGSMLYTVNGFAKGYESYQFQ</sequence>
<protein>
    <recommendedName>
        <fullName>Lactonase drp35</fullName>
        <ecNumber>3.1.1.-</ecNumber>
    </recommendedName>
</protein>
<evidence type="ECO:0000250" key="1"/>
<evidence type="ECO:0000255" key="2"/>
<evidence type="ECO:0000305" key="3"/>
<dbReference type="EC" id="3.1.1.-"/>
<dbReference type="EMBL" id="AE015929">
    <property type="protein sequence ID" value="AAO03860.1"/>
    <property type="molecule type" value="Genomic_DNA"/>
</dbReference>
<dbReference type="RefSeq" id="NP_763818.1">
    <property type="nucleotide sequence ID" value="NC_004461.1"/>
</dbReference>
<dbReference type="RefSeq" id="WP_001829433.1">
    <property type="nucleotide sequence ID" value="NZ_WBME01000037.1"/>
</dbReference>
<dbReference type="SMR" id="Q8CQ97"/>
<dbReference type="KEGG" id="sep:SE_0263"/>
<dbReference type="PATRIC" id="fig|176280.10.peg.241"/>
<dbReference type="eggNOG" id="COG3386">
    <property type="taxonomic scope" value="Bacteria"/>
</dbReference>
<dbReference type="HOGENOM" id="CLU_036110_2_0_9"/>
<dbReference type="OrthoDB" id="2633250at2"/>
<dbReference type="Proteomes" id="UP000001411">
    <property type="component" value="Chromosome"/>
</dbReference>
<dbReference type="GO" id="GO:0005737">
    <property type="term" value="C:cytoplasm"/>
    <property type="evidence" value="ECO:0007669"/>
    <property type="project" value="UniProtKB-SubCell"/>
</dbReference>
<dbReference type="GO" id="GO:0016787">
    <property type="term" value="F:hydrolase activity"/>
    <property type="evidence" value="ECO:0007669"/>
    <property type="project" value="UniProtKB-KW"/>
</dbReference>
<dbReference type="GO" id="GO:0046872">
    <property type="term" value="F:metal ion binding"/>
    <property type="evidence" value="ECO:0007669"/>
    <property type="project" value="UniProtKB-KW"/>
</dbReference>
<dbReference type="Gene3D" id="2.120.10.30">
    <property type="entry name" value="TolB, C-terminal domain"/>
    <property type="match status" value="1"/>
</dbReference>
<dbReference type="InterPro" id="IPR011042">
    <property type="entry name" value="6-blade_b-propeller_TolB-like"/>
</dbReference>
<dbReference type="InterPro" id="IPR013658">
    <property type="entry name" value="SGL"/>
</dbReference>
<dbReference type="InterPro" id="IPR051262">
    <property type="entry name" value="SMP-30/CGR1_Lactonase"/>
</dbReference>
<dbReference type="PANTHER" id="PTHR47572:SF4">
    <property type="entry name" value="LACTONASE DRP35"/>
    <property type="match status" value="1"/>
</dbReference>
<dbReference type="PANTHER" id="PTHR47572">
    <property type="entry name" value="LIPOPROTEIN-RELATED"/>
    <property type="match status" value="1"/>
</dbReference>
<dbReference type="Pfam" id="PF08450">
    <property type="entry name" value="SGL"/>
    <property type="match status" value="1"/>
</dbReference>
<dbReference type="SUPFAM" id="SSF63829">
    <property type="entry name" value="Calcium-dependent phosphotriesterase"/>
    <property type="match status" value="1"/>
</dbReference>
<reference key="1">
    <citation type="journal article" date="2003" name="Mol. Microbiol.">
        <title>Genome-based analysis of virulence genes in a non-biofilm-forming Staphylococcus epidermidis strain (ATCC 12228).</title>
        <authorList>
            <person name="Zhang Y.-Q."/>
            <person name="Ren S.-X."/>
            <person name="Li H.-L."/>
            <person name="Wang Y.-X."/>
            <person name="Fu G."/>
            <person name="Yang J."/>
            <person name="Qin Z.-Q."/>
            <person name="Miao Y.-G."/>
            <person name="Wang W.-Y."/>
            <person name="Chen R.-S."/>
            <person name="Shen Y."/>
            <person name="Chen Z."/>
            <person name="Yuan Z.-H."/>
            <person name="Zhao G.-P."/>
            <person name="Qu D."/>
            <person name="Danchin A."/>
            <person name="Wen Y.-M."/>
        </authorList>
    </citation>
    <scope>NUCLEOTIDE SEQUENCE [LARGE SCALE GENOMIC DNA]</scope>
    <source>
        <strain>ATCC 12228 / FDA PCI 1200</strain>
    </source>
</reference>
<name>DRP35_STAES</name>
<gene>
    <name type="primary">drp35</name>
    <name type="ordered locus">SE_0263</name>
</gene>